<gene>
    <name type="primary">FUT8</name>
</gene>
<dbReference type="EC" id="2.4.1.68"/>
<dbReference type="EMBL" id="AJ781405">
    <property type="protein sequence ID" value="CAH03673.1"/>
    <property type="molecule type" value="mRNA"/>
</dbReference>
<dbReference type="RefSeq" id="NP_001008984.1">
    <property type="nucleotide sequence ID" value="NM_001008984.1"/>
</dbReference>
<dbReference type="RefSeq" id="XP_009425923.1">
    <property type="nucleotide sequence ID" value="XM_009427648.1"/>
</dbReference>
<dbReference type="RefSeq" id="XP_009425924.1">
    <property type="nucleotide sequence ID" value="XM_009427649.2"/>
</dbReference>
<dbReference type="RefSeq" id="XP_016781228.1">
    <property type="nucleotide sequence ID" value="XM_016925739.4"/>
</dbReference>
<dbReference type="RefSeq" id="XP_016781229.1">
    <property type="nucleotide sequence ID" value="XM_016925740.1"/>
</dbReference>
<dbReference type="RefSeq" id="XP_054521645.1">
    <property type="nucleotide sequence ID" value="XM_054665670.2"/>
</dbReference>
<dbReference type="RefSeq" id="XP_054521646.1">
    <property type="nucleotide sequence ID" value="XM_054665671.2"/>
</dbReference>
<dbReference type="RefSeq" id="XP_054521647.1">
    <property type="nucleotide sequence ID" value="XM_054665672.2"/>
</dbReference>
<dbReference type="RefSeq" id="XP_063648733.1">
    <property type="nucleotide sequence ID" value="XM_063792663.1"/>
</dbReference>
<dbReference type="RefSeq" id="XP_063648734.1">
    <property type="nucleotide sequence ID" value="XM_063792664.1"/>
</dbReference>
<dbReference type="RefSeq" id="XP_063648735.1">
    <property type="nucleotide sequence ID" value="XM_063792665.1"/>
</dbReference>
<dbReference type="RefSeq" id="XP_063648736.1">
    <property type="nucleotide sequence ID" value="XM_063792666.1"/>
</dbReference>
<dbReference type="RefSeq" id="XP_063648737.1">
    <property type="nucleotide sequence ID" value="XM_063792667.1"/>
</dbReference>
<dbReference type="RefSeq" id="XP_063648738.1">
    <property type="nucleotide sequence ID" value="XM_063792668.1"/>
</dbReference>
<dbReference type="SMR" id="Q6EV77"/>
<dbReference type="FunCoup" id="Q6EV77">
    <property type="interactions" value="1153"/>
</dbReference>
<dbReference type="STRING" id="9598.ENSPTRP00000010948"/>
<dbReference type="CAZy" id="GT23">
    <property type="family name" value="Glycosyltransferase Family 23"/>
</dbReference>
<dbReference type="PaxDb" id="9598-ENSPTRP00000010948"/>
<dbReference type="Ensembl" id="ENSPTRT00000011823.5">
    <property type="protein sequence ID" value="ENSPTRP00000010948.4"/>
    <property type="gene ID" value="ENSPTRG00000006454.7"/>
</dbReference>
<dbReference type="GeneID" id="449506"/>
<dbReference type="KEGG" id="ptr:449506"/>
<dbReference type="CTD" id="2530"/>
<dbReference type="VGNC" id="VGNC:10245">
    <property type="gene designation" value="FUT8"/>
</dbReference>
<dbReference type="eggNOG" id="KOG3705">
    <property type="taxonomic scope" value="Eukaryota"/>
</dbReference>
<dbReference type="GeneTree" id="ENSGT00530000063737"/>
<dbReference type="HOGENOM" id="CLU_021940_1_0_1"/>
<dbReference type="InParanoid" id="Q6EV77"/>
<dbReference type="OrthoDB" id="1229at9604"/>
<dbReference type="TreeFam" id="TF106108"/>
<dbReference type="UniPathway" id="UPA00378"/>
<dbReference type="Proteomes" id="UP000002277">
    <property type="component" value="Chromosome 14"/>
</dbReference>
<dbReference type="Bgee" id="ENSPTRG00000006454">
    <property type="expression patterns" value="Expressed in fibroblast and 21 other cell types or tissues"/>
</dbReference>
<dbReference type="GO" id="GO:0032580">
    <property type="term" value="C:Golgi cisterna membrane"/>
    <property type="evidence" value="ECO:0007669"/>
    <property type="project" value="UniProtKB-SubCell"/>
</dbReference>
<dbReference type="GO" id="GO:0046921">
    <property type="term" value="F:alpha-(1-&gt;6)-fucosyltransferase activity"/>
    <property type="evidence" value="ECO:0000318"/>
    <property type="project" value="GO_Central"/>
</dbReference>
<dbReference type="GO" id="GO:0008424">
    <property type="term" value="F:glycoprotein 6-alpha-L-fucosyltransferase activity"/>
    <property type="evidence" value="ECO:0000250"/>
    <property type="project" value="UniProtKB"/>
</dbReference>
<dbReference type="GO" id="GO:0017124">
    <property type="term" value="F:SH3 domain binding"/>
    <property type="evidence" value="ECO:0007669"/>
    <property type="project" value="UniProtKB-KW"/>
</dbReference>
<dbReference type="GO" id="GO:0010761">
    <property type="term" value="P:fibroblast migration"/>
    <property type="evidence" value="ECO:0007669"/>
    <property type="project" value="Ensembl"/>
</dbReference>
<dbReference type="GO" id="GO:0046368">
    <property type="term" value="P:GDP-L-fucose metabolic process"/>
    <property type="evidence" value="ECO:0000250"/>
    <property type="project" value="UniProtKB"/>
</dbReference>
<dbReference type="GO" id="GO:0007229">
    <property type="term" value="P:integrin-mediated signaling pathway"/>
    <property type="evidence" value="ECO:0007669"/>
    <property type="project" value="Ensembl"/>
</dbReference>
<dbReference type="GO" id="GO:0036071">
    <property type="term" value="P:N-glycan fucosylation"/>
    <property type="evidence" value="ECO:0000318"/>
    <property type="project" value="GO_Central"/>
</dbReference>
<dbReference type="GO" id="GO:0006491">
    <property type="term" value="P:N-glycan processing"/>
    <property type="evidence" value="ECO:0007669"/>
    <property type="project" value="Ensembl"/>
</dbReference>
<dbReference type="GO" id="GO:0006487">
    <property type="term" value="P:protein N-linked glycosylation"/>
    <property type="evidence" value="ECO:0000318"/>
    <property type="project" value="GO_Central"/>
</dbReference>
<dbReference type="GO" id="GO:0018279">
    <property type="term" value="P:protein N-linked glycosylation via asparagine"/>
    <property type="evidence" value="ECO:0000250"/>
    <property type="project" value="UniProtKB"/>
</dbReference>
<dbReference type="GO" id="GO:0043112">
    <property type="term" value="P:receptor metabolic process"/>
    <property type="evidence" value="ECO:0007669"/>
    <property type="project" value="Ensembl"/>
</dbReference>
<dbReference type="GO" id="GO:1900407">
    <property type="term" value="P:regulation of cellular response to oxidative stress"/>
    <property type="evidence" value="ECO:0007669"/>
    <property type="project" value="Ensembl"/>
</dbReference>
<dbReference type="GO" id="GO:0010468">
    <property type="term" value="P:regulation of gene expression"/>
    <property type="evidence" value="ECO:0007669"/>
    <property type="project" value="Ensembl"/>
</dbReference>
<dbReference type="GO" id="GO:0007585">
    <property type="term" value="P:respiratory gaseous exchange by respiratory system"/>
    <property type="evidence" value="ECO:0007669"/>
    <property type="project" value="Ensembl"/>
</dbReference>
<dbReference type="GO" id="GO:0007179">
    <property type="term" value="P:transforming growth factor beta receptor signaling pathway"/>
    <property type="evidence" value="ECO:0007669"/>
    <property type="project" value="Ensembl"/>
</dbReference>
<dbReference type="CDD" id="cd11300">
    <property type="entry name" value="Fut8_like"/>
    <property type="match status" value="1"/>
</dbReference>
<dbReference type="CDD" id="cd11792">
    <property type="entry name" value="SH3_Fut8"/>
    <property type="match status" value="1"/>
</dbReference>
<dbReference type="FunFam" id="1.10.287.1060:FF:000003">
    <property type="entry name" value="Alpha-(1,6)-fucosyltransferase"/>
    <property type="match status" value="1"/>
</dbReference>
<dbReference type="FunFam" id="2.30.30.40:FF:000070">
    <property type="entry name" value="Alpha-(1,6)-fucosyltransferase"/>
    <property type="match status" value="1"/>
</dbReference>
<dbReference type="FunFam" id="3.40.50.11350:FF:000001">
    <property type="entry name" value="Alpha-(1,6)-fucosyltransferase"/>
    <property type="match status" value="1"/>
</dbReference>
<dbReference type="Gene3D" id="3.40.50.11350">
    <property type="match status" value="1"/>
</dbReference>
<dbReference type="Gene3D" id="1.10.287.1060">
    <property type="entry name" value="ESAT-6-like"/>
    <property type="match status" value="1"/>
</dbReference>
<dbReference type="Gene3D" id="2.30.30.40">
    <property type="entry name" value="SH3 Domains"/>
    <property type="match status" value="1"/>
</dbReference>
<dbReference type="InterPro" id="IPR015827">
    <property type="entry name" value="Fut8"/>
</dbReference>
<dbReference type="InterPro" id="IPR045573">
    <property type="entry name" value="Fut8_N_cat"/>
</dbReference>
<dbReference type="InterPro" id="IPR035653">
    <property type="entry name" value="Fut8_SH3"/>
</dbReference>
<dbReference type="InterPro" id="IPR027350">
    <property type="entry name" value="GT23_dom"/>
</dbReference>
<dbReference type="InterPro" id="IPR036028">
    <property type="entry name" value="SH3-like_dom_sf"/>
</dbReference>
<dbReference type="InterPro" id="IPR001452">
    <property type="entry name" value="SH3_domain"/>
</dbReference>
<dbReference type="PANTHER" id="PTHR13132">
    <property type="entry name" value="ALPHA- 1,6 -FUCOSYLTRANSFERASE"/>
    <property type="match status" value="1"/>
</dbReference>
<dbReference type="PANTHER" id="PTHR13132:SF29">
    <property type="entry name" value="ALPHA-(1,6)-FUCOSYLTRANSFERASE"/>
    <property type="match status" value="1"/>
</dbReference>
<dbReference type="Pfam" id="PF19745">
    <property type="entry name" value="FUT8_N_cat"/>
    <property type="match status" value="1"/>
</dbReference>
<dbReference type="Pfam" id="PF14604">
    <property type="entry name" value="SH3_9"/>
    <property type="match status" value="1"/>
</dbReference>
<dbReference type="PIRSF" id="PIRSF000472">
    <property type="entry name" value="Alpha1_6FUT_euk"/>
    <property type="match status" value="1"/>
</dbReference>
<dbReference type="SMART" id="SM00326">
    <property type="entry name" value="SH3"/>
    <property type="match status" value="1"/>
</dbReference>
<dbReference type="SUPFAM" id="SSF50044">
    <property type="entry name" value="SH3-domain"/>
    <property type="match status" value="1"/>
</dbReference>
<dbReference type="PROSITE" id="PS51659">
    <property type="entry name" value="GT23"/>
    <property type="match status" value="1"/>
</dbReference>
<dbReference type="PROSITE" id="PS50002">
    <property type="entry name" value="SH3"/>
    <property type="match status" value="1"/>
</dbReference>
<evidence type="ECO:0000250" key="1"/>
<evidence type="ECO:0000250" key="2">
    <source>
        <dbReference type="UniProtKB" id="Q9BYC5"/>
    </source>
</evidence>
<evidence type="ECO:0000250" key="3">
    <source>
        <dbReference type="UniProtKB" id="Q9WTS2"/>
    </source>
</evidence>
<evidence type="ECO:0000255" key="4"/>
<evidence type="ECO:0000255" key="5">
    <source>
        <dbReference type="PROSITE-ProRule" id="PRU00192"/>
    </source>
</evidence>
<evidence type="ECO:0000255" key="6">
    <source>
        <dbReference type="PROSITE-ProRule" id="PRU00992"/>
    </source>
</evidence>
<organism>
    <name type="scientific">Pan troglodytes</name>
    <name type="common">Chimpanzee</name>
    <dbReference type="NCBI Taxonomy" id="9598"/>
    <lineage>
        <taxon>Eukaryota</taxon>
        <taxon>Metazoa</taxon>
        <taxon>Chordata</taxon>
        <taxon>Craniata</taxon>
        <taxon>Vertebrata</taxon>
        <taxon>Euteleostomi</taxon>
        <taxon>Mammalia</taxon>
        <taxon>Eutheria</taxon>
        <taxon>Euarchontoglires</taxon>
        <taxon>Primates</taxon>
        <taxon>Haplorrhini</taxon>
        <taxon>Catarrhini</taxon>
        <taxon>Hominidae</taxon>
        <taxon>Pan</taxon>
    </lineage>
</organism>
<reference key="1">
    <citation type="submission" date="2004-07" db="EMBL/GenBank/DDBJ databases">
        <authorList>
            <person name="Martinez-Duncker I."/>
            <person name="Oriol R."/>
            <person name="Mollicone R."/>
        </authorList>
    </citation>
    <scope>NUCLEOTIDE SEQUENCE [MRNA]</scope>
</reference>
<accession>Q6EV77</accession>
<keyword id="KW-1015">Disulfide bond</keyword>
<keyword id="KW-0328">Glycosyltransferase</keyword>
<keyword id="KW-0333">Golgi apparatus</keyword>
<keyword id="KW-0472">Membrane</keyword>
<keyword id="KW-0597">Phosphoprotein</keyword>
<keyword id="KW-1185">Reference proteome</keyword>
<keyword id="KW-0728">SH3 domain</keyword>
<keyword id="KW-0729">SH3-binding</keyword>
<keyword id="KW-0735">Signal-anchor</keyword>
<keyword id="KW-0808">Transferase</keyword>
<keyword id="KW-0812">Transmembrane</keyword>
<keyword id="KW-1133">Transmembrane helix</keyword>
<protein>
    <recommendedName>
        <fullName>Alpha-(1,6)-fucosyltransferase</fullName>
        <shortName>Alpha1-6FucT</shortName>
        <ecNumber>2.4.1.68</ecNumber>
    </recommendedName>
    <alternativeName>
        <fullName>Fucosyltransferase 8</fullName>
    </alternativeName>
    <alternativeName>
        <fullName>GDP-L-Fuc:N-acetyl-beta-D-glucosaminide alpha1,6-fucosyltransferase</fullName>
    </alternativeName>
    <alternativeName>
        <fullName>GDP-fucose--glycoprotein fucosyltransferase</fullName>
    </alternativeName>
    <alternativeName>
        <fullName>Glycoprotein 6-alpha-L-fucosyltransferase</fullName>
    </alternativeName>
</protein>
<name>FUT8_PANTR</name>
<feature type="chain" id="PRO_0000080528" description="Alpha-(1,6)-fucosyltransferase">
    <location>
        <begin position="1"/>
        <end position="575"/>
    </location>
</feature>
<feature type="topological domain" description="Cytoplasmic" evidence="4">
    <location>
        <begin position="1"/>
        <end position="9"/>
    </location>
</feature>
<feature type="transmembrane region" description="Helical; Signal-anchor for type II membrane protein" evidence="4">
    <location>
        <begin position="10"/>
        <end position="30"/>
    </location>
</feature>
<feature type="topological domain" description="Lumenal" evidence="4">
    <location>
        <begin position="31"/>
        <end position="575"/>
    </location>
</feature>
<feature type="domain" description="GT23" evidence="6">
    <location>
        <begin position="206"/>
        <end position="493"/>
    </location>
</feature>
<feature type="domain" description="SH3" evidence="5">
    <location>
        <begin position="502"/>
        <end position="563"/>
    </location>
</feature>
<feature type="region of interest" description="Important for donor substrate binding" evidence="6">
    <location>
        <begin position="365"/>
        <end position="366"/>
    </location>
</feature>
<feature type="short sequence motif" description="SH3-binding" evidence="4">
    <location>
        <begin position="299"/>
        <end position="305"/>
    </location>
</feature>
<feature type="modified residue" description="Phosphoserine" evidence="3">
    <location>
        <position position="278"/>
    </location>
</feature>
<feature type="disulfide bond" evidence="1">
    <location>
        <begin position="204"/>
        <end position="266"/>
    </location>
</feature>
<feature type="disulfide bond" evidence="1">
    <location>
        <begin position="212"/>
        <end position="230"/>
    </location>
</feature>
<feature type="disulfide bond" evidence="1">
    <location>
        <begin position="218"/>
        <end position="222"/>
    </location>
</feature>
<feature type="disulfide bond" evidence="1">
    <location>
        <begin position="465"/>
        <end position="472"/>
    </location>
</feature>
<proteinExistence type="evidence at transcript level"/>
<sequence length="575" mass="66516">MRPWTGSWRWIMLILFAWGTLLFYIGGHLVRDNDHPDHSSRELSKILAKLERLKQQNEDLRRMAESLRIPEGPIDQGPAIGRVRVLEEQLVKAKEQIENYKKQTRNGLGKDHEILRRRIENGAKELWFFLQSELKKLKNLEGNELQRHADEFLLDLGHHERSIMTDLYYLSQTDGAGDWREKEAKDLTELVQRRITYLQNPKDCSKAKKLVCNINKGCGYGCQLHHVVYCFMIAYGTQRTLILESQNWRYATGGWETVFRPVSETCTDRSGISTGHWSGEVKDKNVQVVELPIVDSLHPRPPYLPLAVPEDLADRLVRVHGDPAVWWVSQFVKYLIRPQPWLEKEIEEATKKLGFKHPVIGVHVRRTDKVGTEAAFHPIEEYMVHVEEHFQLLARRMQVDKKRVYLATDDPSLLKEAKTKYPNYEFISDNSISWSAGLHNRYTENSLRGVILDIHFLSQADFLVCTFSSQVCRVAYEIMQTLHPDASANFHSLDDIYYFGGQNAHNQIAIYAHQPRTADEIPMEPGDIIGVAGNHWDGYSKGVNRKLGRTGLYPSYKVREKIETVKYPTYPEAEK</sequence>
<comment type="function">
    <text evidence="1">Catalyzes the addition of fucose in alpha 1-6 linkage to the first GlcNAc residue, next to the peptide chains in N-glycans.</text>
</comment>
<comment type="catalytic activity">
    <reaction>
        <text>N(4)-{beta-D-GlcNAc-(1-&gt;2)-alpha-D-Man-(1-&gt;3)-[beta-D-GlcNAc-(1-&gt;2)-alpha-D-Man-(1-&gt;6)]-beta-D-Man-(1-&gt;4)-beta-D-GlcNAc-(1-&gt;4)-beta-D-GlcNAc}-L-asparaginyl-[protein] + GDP-beta-L-fucose = an N(4)-{beta-D-GlcNAc-(1-&gt;2)-alpha-D-Man-(1-&gt;3)-[beta-D-GlcNAc-(1-&gt;2)-alpha-D-Man-(1-&gt;6)]-beta-D-Man-(1-&gt;4)-beta-D-GlcNAc-(1-&gt;4)-[alpha-L-Fuc-(1-&gt;6)]-beta-D-GlcNAc}-L-asparaginyl-[protein] + GDP + H(+)</text>
        <dbReference type="Rhea" id="RHEA:12985"/>
        <dbReference type="Rhea" id="RHEA-COMP:13526"/>
        <dbReference type="Rhea" id="RHEA-COMP:13532"/>
        <dbReference type="ChEBI" id="CHEBI:15378"/>
        <dbReference type="ChEBI" id="CHEBI:57273"/>
        <dbReference type="ChEBI" id="CHEBI:58189"/>
        <dbReference type="ChEBI" id="CHEBI:60651"/>
        <dbReference type="ChEBI" id="CHEBI:137207"/>
        <dbReference type="EC" id="2.4.1.68"/>
    </reaction>
</comment>
<comment type="pathway">
    <text>Protein modification; protein glycosylation.</text>
</comment>
<comment type="subcellular location">
    <subcellularLocation>
        <location evidence="1">Golgi apparatus</location>
        <location evidence="1">Golgi stack membrane</location>
        <topology evidence="1">Single-pass type II membrane protein</topology>
    </subcellularLocation>
    <text evidence="1">Membrane-bound form in trans cisternae of Golgi.</text>
</comment>
<comment type="PTM">
    <text evidence="2">Tyrosine phosphorylated by PKDCC/VLK.</text>
</comment>
<comment type="similarity">
    <text evidence="6">Belongs to the glycosyltransferase 23 family.</text>
</comment>